<comment type="function">
    <text evidence="1">Catalyzes the condensation of (S)-aspartate-beta-semialdehyde [(S)-ASA] and pyruvate to 4-hydroxy-tetrahydrodipicolinate (HTPA).</text>
</comment>
<comment type="catalytic activity">
    <reaction evidence="1">
        <text>L-aspartate 4-semialdehyde + pyruvate = (2S,4S)-4-hydroxy-2,3,4,5-tetrahydrodipicolinate + H2O + H(+)</text>
        <dbReference type="Rhea" id="RHEA:34171"/>
        <dbReference type="ChEBI" id="CHEBI:15361"/>
        <dbReference type="ChEBI" id="CHEBI:15377"/>
        <dbReference type="ChEBI" id="CHEBI:15378"/>
        <dbReference type="ChEBI" id="CHEBI:67139"/>
        <dbReference type="ChEBI" id="CHEBI:537519"/>
        <dbReference type="EC" id="4.3.3.7"/>
    </reaction>
</comment>
<comment type="pathway">
    <text evidence="1">Amino-acid biosynthesis; L-lysine biosynthesis via DAP pathway; (S)-tetrahydrodipicolinate from L-aspartate: step 3/4.</text>
</comment>
<comment type="subunit">
    <text evidence="1">Homotetramer; dimer of dimers.</text>
</comment>
<comment type="subcellular location">
    <subcellularLocation>
        <location evidence="1">Cytoplasm</location>
    </subcellularLocation>
</comment>
<comment type="similarity">
    <text evidence="1">Belongs to the DapA family.</text>
</comment>
<comment type="caution">
    <text evidence="2">Was originally thought to be a dihydrodipicolinate synthase (DHDPS), catalyzing the condensation of (S)-aspartate-beta-semialdehyde [(S)-ASA] and pyruvate to dihydrodipicolinate (DHDP). However, it was shown in E.coli that the product of the enzymatic reaction is not dihydrodipicolinate but in fact (4S)-4-hydroxy-2,3,4,5-tetrahydro-(2S)-dipicolinic acid (HTPA), and that the consecutive dehydration reaction leading to DHDP is not spontaneous but catalyzed by DapB.</text>
</comment>
<protein>
    <recommendedName>
        <fullName evidence="1">4-hydroxy-tetrahydrodipicolinate synthase</fullName>
        <shortName evidence="1">HTPA synthase</shortName>
        <ecNumber evidence="1">4.3.3.7</ecNumber>
    </recommendedName>
</protein>
<keyword id="KW-0028">Amino-acid biosynthesis</keyword>
<keyword id="KW-0963">Cytoplasm</keyword>
<keyword id="KW-0220">Diaminopimelate biosynthesis</keyword>
<keyword id="KW-0456">Lyase</keyword>
<keyword id="KW-0457">Lysine biosynthesis</keyword>
<keyword id="KW-0704">Schiff base</keyword>
<dbReference type="EC" id="4.3.3.7" evidence="1"/>
<dbReference type="EMBL" id="CP000847">
    <property type="protein sequence ID" value="ABV74926.1"/>
    <property type="molecule type" value="Genomic_DNA"/>
</dbReference>
<dbReference type="RefSeq" id="WP_012149559.1">
    <property type="nucleotide sequence ID" value="NC_009881.1"/>
</dbReference>
<dbReference type="SMR" id="A8GNF1"/>
<dbReference type="STRING" id="293614.A1C_03200"/>
<dbReference type="KEGG" id="rak:A1C_03200"/>
<dbReference type="eggNOG" id="COG0329">
    <property type="taxonomic scope" value="Bacteria"/>
</dbReference>
<dbReference type="HOGENOM" id="CLU_049343_7_1_5"/>
<dbReference type="UniPathway" id="UPA00034">
    <property type="reaction ID" value="UER00017"/>
</dbReference>
<dbReference type="Proteomes" id="UP000006830">
    <property type="component" value="Chromosome"/>
</dbReference>
<dbReference type="GO" id="GO:0005737">
    <property type="term" value="C:cytoplasm"/>
    <property type="evidence" value="ECO:0007669"/>
    <property type="project" value="UniProtKB-SubCell"/>
</dbReference>
<dbReference type="GO" id="GO:0008700">
    <property type="term" value="F:(R,S)-4-hydroxy-2-oxoglutarate aldolase activity"/>
    <property type="evidence" value="ECO:0007669"/>
    <property type="project" value="TreeGrafter"/>
</dbReference>
<dbReference type="GO" id="GO:0008840">
    <property type="term" value="F:4-hydroxy-tetrahydrodipicolinate synthase activity"/>
    <property type="evidence" value="ECO:0007669"/>
    <property type="project" value="UniProtKB-UniRule"/>
</dbReference>
<dbReference type="GO" id="GO:0019877">
    <property type="term" value="P:diaminopimelate biosynthetic process"/>
    <property type="evidence" value="ECO:0007669"/>
    <property type="project" value="UniProtKB-UniRule"/>
</dbReference>
<dbReference type="GO" id="GO:0009436">
    <property type="term" value="P:glyoxylate catabolic process"/>
    <property type="evidence" value="ECO:0007669"/>
    <property type="project" value="TreeGrafter"/>
</dbReference>
<dbReference type="GO" id="GO:0009089">
    <property type="term" value="P:lysine biosynthetic process via diaminopimelate"/>
    <property type="evidence" value="ECO:0007669"/>
    <property type="project" value="UniProtKB-UniRule"/>
</dbReference>
<dbReference type="CDD" id="cd00950">
    <property type="entry name" value="DHDPS"/>
    <property type="match status" value="1"/>
</dbReference>
<dbReference type="Gene3D" id="3.20.20.70">
    <property type="entry name" value="Aldolase class I"/>
    <property type="match status" value="1"/>
</dbReference>
<dbReference type="HAMAP" id="MF_00418">
    <property type="entry name" value="DapA"/>
    <property type="match status" value="1"/>
</dbReference>
<dbReference type="InterPro" id="IPR013785">
    <property type="entry name" value="Aldolase_TIM"/>
</dbReference>
<dbReference type="InterPro" id="IPR005263">
    <property type="entry name" value="DapA"/>
</dbReference>
<dbReference type="InterPro" id="IPR002220">
    <property type="entry name" value="DapA-like"/>
</dbReference>
<dbReference type="InterPro" id="IPR020625">
    <property type="entry name" value="Schiff_base-form_aldolases_AS"/>
</dbReference>
<dbReference type="InterPro" id="IPR020624">
    <property type="entry name" value="Schiff_base-form_aldolases_CS"/>
</dbReference>
<dbReference type="NCBIfam" id="TIGR00674">
    <property type="entry name" value="dapA"/>
    <property type="match status" value="1"/>
</dbReference>
<dbReference type="PANTHER" id="PTHR12128:SF66">
    <property type="entry name" value="4-HYDROXY-2-OXOGLUTARATE ALDOLASE, MITOCHONDRIAL"/>
    <property type="match status" value="1"/>
</dbReference>
<dbReference type="PANTHER" id="PTHR12128">
    <property type="entry name" value="DIHYDRODIPICOLINATE SYNTHASE"/>
    <property type="match status" value="1"/>
</dbReference>
<dbReference type="Pfam" id="PF00701">
    <property type="entry name" value="DHDPS"/>
    <property type="match status" value="1"/>
</dbReference>
<dbReference type="PIRSF" id="PIRSF001365">
    <property type="entry name" value="DHDPS"/>
    <property type="match status" value="1"/>
</dbReference>
<dbReference type="PRINTS" id="PR00146">
    <property type="entry name" value="DHPICSNTHASE"/>
</dbReference>
<dbReference type="SMART" id="SM01130">
    <property type="entry name" value="DHDPS"/>
    <property type="match status" value="1"/>
</dbReference>
<dbReference type="SUPFAM" id="SSF51569">
    <property type="entry name" value="Aldolase"/>
    <property type="match status" value="1"/>
</dbReference>
<dbReference type="PROSITE" id="PS00665">
    <property type="entry name" value="DHDPS_1"/>
    <property type="match status" value="1"/>
</dbReference>
<dbReference type="PROSITE" id="PS00666">
    <property type="entry name" value="DHDPS_2"/>
    <property type="match status" value="1"/>
</dbReference>
<accession>A8GNF1</accession>
<feature type="chain" id="PRO_1000050255" description="4-hydroxy-tetrahydrodipicolinate synthase">
    <location>
        <begin position="1"/>
        <end position="294"/>
    </location>
</feature>
<feature type="active site" description="Proton donor/acceptor" evidence="1">
    <location>
        <position position="135"/>
    </location>
</feature>
<feature type="active site" description="Schiff-base intermediate with substrate" evidence="1">
    <location>
        <position position="163"/>
    </location>
</feature>
<feature type="binding site" evidence="1">
    <location>
        <position position="47"/>
    </location>
    <ligand>
        <name>pyruvate</name>
        <dbReference type="ChEBI" id="CHEBI:15361"/>
    </ligand>
</feature>
<feature type="binding site" evidence="1">
    <location>
        <position position="205"/>
    </location>
    <ligand>
        <name>pyruvate</name>
        <dbReference type="ChEBI" id="CHEBI:15361"/>
    </ligand>
</feature>
<feature type="site" description="Part of a proton relay during catalysis" evidence="1">
    <location>
        <position position="46"/>
    </location>
</feature>
<feature type="site" description="Part of a proton relay during catalysis" evidence="1">
    <location>
        <position position="109"/>
    </location>
</feature>
<gene>
    <name evidence="1" type="primary">dapA</name>
    <name type="ordered locus">A1C_03200</name>
</gene>
<reference key="1">
    <citation type="submission" date="2007-09" db="EMBL/GenBank/DDBJ databases">
        <title>Complete genome sequence of Rickettsia akari.</title>
        <authorList>
            <person name="Madan A."/>
            <person name="Fahey J."/>
            <person name="Helton E."/>
            <person name="Ketteman M."/>
            <person name="Madan A."/>
            <person name="Rodrigues S."/>
            <person name="Sanchez A."/>
            <person name="Whiting M."/>
            <person name="Dasch G."/>
            <person name="Eremeeva M."/>
        </authorList>
    </citation>
    <scope>NUCLEOTIDE SEQUENCE [LARGE SCALE GENOMIC DNA]</scope>
    <source>
        <strain>Hartford</strain>
    </source>
</reference>
<proteinExistence type="inferred from homology"/>
<name>DAPA_RICAH</name>
<organism>
    <name type="scientific">Rickettsia akari (strain Hartford)</name>
    <dbReference type="NCBI Taxonomy" id="293614"/>
    <lineage>
        <taxon>Bacteria</taxon>
        <taxon>Pseudomonadati</taxon>
        <taxon>Pseudomonadota</taxon>
        <taxon>Alphaproteobacteria</taxon>
        <taxon>Rickettsiales</taxon>
        <taxon>Rickettsiaceae</taxon>
        <taxon>Rickettsieae</taxon>
        <taxon>Rickettsia</taxon>
        <taxon>spotted fever group</taxon>
    </lineage>
</organism>
<sequence length="294" mass="32464">MNNIFKGLITALITPFKDNKLDLYALERILKHQIKHDVDAILIAGSTGEGSSLSFEEYKLLLQTSVEIVNKRIPIISGCSSNNTAYAIELAAESTKIKVDGFMASPPSYVKPTQHGIYKHFEALHEACNLPIILYSAPTRSGVDFSDETILRLSALTRILALKDCGVDLGRPLRIRAIVKKDFNILTGNDEVVLAFNAQGGVGWTAVASNIAPDMCKELLEKWYKNDTKGALEIHQKLLPLYKALFLESNPIPIKYAAHYLGLCENEIRPPLTEASDSAKKQIENIITALSIKI</sequence>
<evidence type="ECO:0000255" key="1">
    <source>
        <dbReference type="HAMAP-Rule" id="MF_00418"/>
    </source>
</evidence>
<evidence type="ECO:0000305" key="2"/>